<accession>P02728</accession>
<evidence type="ECO:0000269" key="1">
    <source>
    </source>
</evidence>
<evidence type="ECO:0000305" key="2"/>
<organism>
    <name type="scientific">Homo sapiens</name>
    <name type="common">Human</name>
    <dbReference type="NCBI Taxonomy" id="9606"/>
    <lineage>
        <taxon>Eukaryota</taxon>
        <taxon>Metazoa</taxon>
        <taxon>Chordata</taxon>
        <taxon>Craniata</taxon>
        <taxon>Vertebrata</taxon>
        <taxon>Euteleostomi</taxon>
        <taxon>Mammalia</taxon>
        <taxon>Eutheria</taxon>
        <taxon>Euarchontoglires</taxon>
        <taxon>Primates</taxon>
        <taxon>Haplorrhini</taxon>
        <taxon>Catarrhini</taxon>
        <taxon>Hominidae</taxon>
        <taxon>Homo</taxon>
    </lineage>
</organism>
<reference key="1">
    <citation type="journal article" date="1971" name="Nature New Biol.">
        <title>New low molecular weight glycopeptide containing triglucosylcysteine in human erythrocyte membrane.</title>
        <authorList>
            <person name="Weiss J.B."/>
            <person name="Lote C.J."/>
            <person name="Bobinski H."/>
        </authorList>
    </citation>
    <scope>PROTEIN SEQUENCE</scope>
</reference>
<comment type="PTM">
    <text>S-linked glycan consists of Glc-Glc-Glc trisaccharide.</text>
</comment>
<comment type="caution">
    <text evidence="2">Since this peptide was first reported, its unique glycosylation modification has not been observed again, and the peptide sequence has not been found in the complete proteome.</text>
</comment>
<protein>
    <recommendedName>
        <fullName>Erythrocyte membrane glycopeptide</fullName>
    </recommendedName>
</protein>
<sequence length="10" mass="1049">CEGHSHDHGA</sequence>
<name>GLEM_HUMAN</name>
<keyword id="KW-0903">Direct protein sequencing</keyword>
<keyword id="KW-0325">Glycoprotein</keyword>
<dbReference type="PIR" id="A03187">
    <property type="entry name" value="XGHUE"/>
</dbReference>
<dbReference type="iPTMnet" id="P02728"/>
<dbReference type="Pharos" id="P02728">
    <property type="development level" value="Tdark"/>
</dbReference>
<proteinExistence type="evidence at protein level"/>
<feature type="peptide" id="PRO_0000044140" description="Erythrocyte membrane glycopeptide">
    <location>
        <begin position="1"/>
        <end position="10"/>
    </location>
</feature>
<feature type="glycosylation site" description="S-linked (Glc...) cysteine" evidence="1">
    <location>
        <position position="1"/>
    </location>
</feature>